<sequence>MSSLEISSSCFNQETKLPLSLPLVEGSTFEPPGKDMNEVEEKSKDIIKFTSEKLSVDEVSQLVISPLCGAISLFVGTTRNNFEGKKVISLEYEAYLPMAENEIRKICSDMRQKWPVRHIAVFHRLGLVPVTEASVIIAVSSAHRAASLEAVSYAIDALKARVPIWKKEIYEESSSSWKRNKECFWATSD</sequence>
<comment type="function">
    <text evidence="2">Catalytic subunit of the molybdopterin synthase complex, a complex that catalyzes the conversion of precursor Z into molybdopterin. Acts by mediating the incorporation of 2 sulfur atoms from thiocarboxylated MOCS2A into precursor Z to generate a dithiolene group.</text>
</comment>
<comment type="catalytic activity">
    <reaction evidence="2">
        <text>2 [molybdopterin-synthase sulfur-carrier protein]-C-terminal-Gly-aminoethanethioate + cyclic pyranopterin phosphate + H2O = molybdopterin + 2 [molybdopterin-synthase sulfur-carrier protein]-C-terminal Gly-Gly + 2 H(+)</text>
        <dbReference type="Rhea" id="RHEA:26333"/>
        <dbReference type="Rhea" id="RHEA-COMP:12202"/>
        <dbReference type="Rhea" id="RHEA-COMP:19907"/>
        <dbReference type="ChEBI" id="CHEBI:15377"/>
        <dbReference type="ChEBI" id="CHEBI:15378"/>
        <dbReference type="ChEBI" id="CHEBI:58698"/>
        <dbReference type="ChEBI" id="CHEBI:59648"/>
        <dbReference type="ChEBI" id="CHEBI:90778"/>
        <dbReference type="ChEBI" id="CHEBI:232372"/>
        <dbReference type="EC" id="2.8.1.12"/>
    </reaction>
</comment>
<comment type="pathway">
    <text evidence="2">Cofactor biosynthesis; molybdopterin biosynthesis.</text>
</comment>
<comment type="subunit">
    <text evidence="2">Heterotetramer; composed of 2 small (MOCS2A) and 2 large (MOCS2B) subunits.</text>
</comment>
<comment type="subcellular location">
    <subcellularLocation>
        <location evidence="2">Cytoplasm</location>
        <location evidence="2">Cytosol</location>
    </subcellularLocation>
</comment>
<comment type="miscellaneous">
    <text>This protein is produced by a bicistronic gene which also produces the small subunit (MOCS2A) from an overlapping reading frame.</text>
</comment>
<comment type="similarity">
    <text evidence="2">Belongs to the MoaE family. MOCS2B subfamily.</text>
</comment>
<organism>
    <name type="scientific">Bos taurus</name>
    <name type="common">Bovine</name>
    <dbReference type="NCBI Taxonomy" id="9913"/>
    <lineage>
        <taxon>Eukaryota</taxon>
        <taxon>Metazoa</taxon>
        <taxon>Chordata</taxon>
        <taxon>Craniata</taxon>
        <taxon>Vertebrata</taxon>
        <taxon>Euteleostomi</taxon>
        <taxon>Mammalia</taxon>
        <taxon>Eutheria</taxon>
        <taxon>Laurasiatheria</taxon>
        <taxon>Artiodactyla</taxon>
        <taxon>Ruminantia</taxon>
        <taxon>Pecora</taxon>
        <taxon>Bovidae</taxon>
        <taxon>Bovinae</taxon>
        <taxon>Bos</taxon>
    </lineage>
</organism>
<keyword id="KW-0963">Cytoplasm</keyword>
<keyword id="KW-0501">Molybdenum cofactor biosynthesis</keyword>
<keyword id="KW-0597">Phosphoprotein</keyword>
<keyword id="KW-1185">Reference proteome</keyword>
<keyword id="KW-0808">Transferase</keyword>
<gene>
    <name evidence="2" type="primary">MOCS2</name>
</gene>
<proteinExistence type="evidence at transcript level"/>
<feature type="chain" id="PRO_0000369325" description="Molybdopterin synthase catalytic subunit">
    <location>
        <begin position="1"/>
        <end position="189"/>
    </location>
</feature>
<feature type="binding site" evidence="2">
    <location>
        <begin position="143"/>
        <end position="144"/>
    </location>
    <ligand>
        <name>substrate</name>
    </ligand>
</feature>
<feature type="binding site" evidence="2">
    <location>
        <position position="159"/>
    </location>
    <ligand>
        <name>substrate</name>
    </ligand>
</feature>
<feature type="binding site" evidence="2">
    <location>
        <begin position="166"/>
        <end position="168"/>
    </location>
    <ligand>
        <name>substrate</name>
    </ligand>
</feature>
<feature type="modified residue" description="Phosphoserine" evidence="1">
    <location>
        <position position="20"/>
    </location>
</feature>
<feature type="sequence conflict" description="In Ref. 1; AAX46362." evidence="3" ref="1">
    <original>S</original>
    <variation>N</variation>
    <location>
        <position position="27"/>
    </location>
</feature>
<feature type="sequence conflict" description="In Ref. 1; AAX46362." evidence="3" ref="1">
    <original>E</original>
    <variation>D</variation>
    <location>
        <position position="58"/>
    </location>
</feature>
<dbReference type="EC" id="2.8.1.12" evidence="2"/>
<dbReference type="EMBL" id="BT021515">
    <property type="protein sequence ID" value="AAX46362.1"/>
    <property type="molecule type" value="mRNA"/>
</dbReference>
<dbReference type="EMBL" id="BC123458">
    <property type="protein sequence ID" value="AAI23459.2"/>
    <property type="molecule type" value="mRNA"/>
</dbReference>
<dbReference type="RefSeq" id="NP_001014867.1">
    <property type="nucleotide sequence ID" value="NM_001014867.1"/>
</dbReference>
<dbReference type="RefSeq" id="XP_005221575.1">
    <property type="nucleotide sequence ID" value="XM_005221518.3"/>
</dbReference>
<dbReference type="RefSeq" id="XP_005221576.1">
    <property type="nucleotide sequence ID" value="XM_005221519.5"/>
</dbReference>
<dbReference type="RefSeq" id="XP_059734669.1">
    <property type="nucleotide sequence ID" value="XM_059878686.1"/>
</dbReference>
<dbReference type="RefSeq" id="XP_059734670.1">
    <property type="nucleotide sequence ID" value="XM_059878687.1"/>
</dbReference>
<dbReference type="SMR" id="A4FUY7"/>
<dbReference type="FunCoup" id="A4FUY7">
    <property type="interactions" value="1045"/>
</dbReference>
<dbReference type="STRING" id="9913.ENSBTAP00000007087"/>
<dbReference type="PaxDb" id="9913-ENSBTAP00000007087"/>
<dbReference type="GeneID" id="507986"/>
<dbReference type="KEGG" id="bta:507986"/>
<dbReference type="CTD" id="4338"/>
<dbReference type="VEuPathDB" id="HostDB:ENSBTAG00000005380"/>
<dbReference type="eggNOG" id="KOG3307">
    <property type="taxonomic scope" value="Eukaryota"/>
</dbReference>
<dbReference type="HOGENOM" id="CLU_089568_0_1_1"/>
<dbReference type="InParanoid" id="A4FUY7"/>
<dbReference type="OMA" id="WKHQFFA"/>
<dbReference type="OrthoDB" id="5531344at2759"/>
<dbReference type="TreeFam" id="TF314334"/>
<dbReference type="UniPathway" id="UPA00344"/>
<dbReference type="Proteomes" id="UP000009136">
    <property type="component" value="Chromosome 20"/>
</dbReference>
<dbReference type="Bgee" id="ENSBTAG00000005380">
    <property type="expression patterns" value="Expressed in metanephros cortex and 108 other cell types or tissues"/>
</dbReference>
<dbReference type="GO" id="GO:0005829">
    <property type="term" value="C:cytosol"/>
    <property type="evidence" value="ECO:0000250"/>
    <property type="project" value="UniProtKB"/>
</dbReference>
<dbReference type="GO" id="GO:1990140">
    <property type="term" value="C:molybdopterin synthase complex"/>
    <property type="evidence" value="ECO:0000250"/>
    <property type="project" value="UniProtKB"/>
</dbReference>
<dbReference type="GO" id="GO:0030366">
    <property type="term" value="F:molybdopterin synthase activity"/>
    <property type="evidence" value="ECO:0007669"/>
    <property type="project" value="UniProtKB-UniRule"/>
</dbReference>
<dbReference type="GO" id="GO:0006777">
    <property type="term" value="P:Mo-molybdopterin cofactor biosynthetic process"/>
    <property type="evidence" value="ECO:0000250"/>
    <property type="project" value="UniProtKB"/>
</dbReference>
<dbReference type="CDD" id="cd00756">
    <property type="entry name" value="MoaE"/>
    <property type="match status" value="1"/>
</dbReference>
<dbReference type="FunFam" id="3.90.1170.40:FF:000002">
    <property type="entry name" value="Molybdopterin synthase catalytic subunit"/>
    <property type="match status" value="1"/>
</dbReference>
<dbReference type="Gene3D" id="3.90.1170.40">
    <property type="entry name" value="Molybdopterin biosynthesis MoaE subunit"/>
    <property type="match status" value="1"/>
</dbReference>
<dbReference type="HAMAP" id="MF_03052">
    <property type="entry name" value="MOC2B"/>
    <property type="match status" value="1"/>
</dbReference>
<dbReference type="InterPro" id="IPR036563">
    <property type="entry name" value="MoaE_sf"/>
</dbReference>
<dbReference type="InterPro" id="IPR028888">
    <property type="entry name" value="MOCS2B_euk"/>
</dbReference>
<dbReference type="InterPro" id="IPR003448">
    <property type="entry name" value="Mopterin_biosynth_MoaE"/>
</dbReference>
<dbReference type="PANTHER" id="PTHR23404">
    <property type="entry name" value="MOLYBDOPTERIN SYNTHASE RELATED"/>
    <property type="match status" value="1"/>
</dbReference>
<dbReference type="Pfam" id="PF02391">
    <property type="entry name" value="MoaE"/>
    <property type="match status" value="1"/>
</dbReference>
<dbReference type="SUPFAM" id="SSF54690">
    <property type="entry name" value="Molybdopterin synthase subunit MoaE"/>
    <property type="match status" value="1"/>
</dbReference>
<protein>
    <recommendedName>
        <fullName evidence="2">Molybdopterin synthase catalytic subunit</fullName>
        <ecNumber evidence="2">2.8.1.12</ecNumber>
    </recommendedName>
    <alternativeName>
        <fullName evidence="2">Molybdenum cofactor synthesis protein 2 large subunit</fullName>
    </alternativeName>
    <alternativeName>
        <fullName evidence="2">Molybdenum cofactor synthesis protein 2B</fullName>
        <shortName evidence="2">MOCS2B</shortName>
    </alternativeName>
</protein>
<reference key="1">
    <citation type="journal article" date="2005" name="BMC Genomics">
        <title>Characterization of 954 bovine full-CDS cDNA sequences.</title>
        <authorList>
            <person name="Harhay G.P."/>
            <person name="Sonstegard T.S."/>
            <person name="Keele J.W."/>
            <person name="Heaton M.P."/>
            <person name="Clawson M.L."/>
            <person name="Snelling W.M."/>
            <person name="Wiedmann R.T."/>
            <person name="Van Tassell C.P."/>
            <person name="Smith T.P.L."/>
        </authorList>
    </citation>
    <scope>NUCLEOTIDE SEQUENCE [LARGE SCALE MRNA]</scope>
</reference>
<reference key="2">
    <citation type="submission" date="2006-09" db="EMBL/GenBank/DDBJ databases">
        <authorList>
            <consortium name="NIH - Mammalian Gene Collection (MGC) project"/>
        </authorList>
    </citation>
    <scope>NUCLEOTIDE SEQUENCE [LARGE SCALE MRNA]</scope>
    <source>
        <strain>Hereford</strain>
        <tissue>Hippocampus</tissue>
    </source>
</reference>
<evidence type="ECO:0000250" key="1">
    <source>
        <dbReference type="UniProtKB" id="O96007"/>
    </source>
</evidence>
<evidence type="ECO:0000255" key="2">
    <source>
        <dbReference type="HAMAP-Rule" id="MF_03052"/>
    </source>
</evidence>
<evidence type="ECO:0000305" key="3"/>
<accession>A4FUY7</accession>
<accession>Q58DT2</accession>
<name>MOC2B_BOVIN</name>